<reference key="1">
    <citation type="journal article" date="1999" name="Proc. Natl. Acad. Sci. U.S.A.">
        <title>Epiregulin is a potent vascular smooth muscle cell-derived mitogen induced by angiotensin II, endothelin-1, and thrombin.</title>
        <authorList>
            <person name="Taylor D.S."/>
            <person name="Cheng X."/>
            <person name="Pawlowski J.E."/>
            <person name="Wallace A.R."/>
            <person name="Ferrer P."/>
            <person name="Molloy C.J."/>
        </authorList>
    </citation>
    <scope>NUCLEOTIDE SEQUENCE [MRNA]</scope>
    <scope>PROTEIN SEQUENCE OF 56-75</scope>
    <scope>FUNCTION</scope>
    <scope>INDUCTION</scope>
    <source>
        <tissue>Aortic smooth muscle</tissue>
    </source>
</reference>
<reference key="2">
    <citation type="journal article" date="2002" name="Endocrinology">
        <title>Transcriptional regulation of the epiregulin gene in the rat ovary.</title>
        <authorList>
            <person name="Sekiguchi T."/>
            <person name="Mizutani T."/>
            <person name="Yamada K."/>
            <person name="Yazawa T."/>
            <person name="Kawata H."/>
            <person name="Yoshino M."/>
            <person name="Kajitani T."/>
            <person name="Kameda T."/>
            <person name="Minegishi T."/>
            <person name="Miyamoto K."/>
        </authorList>
    </citation>
    <scope>NUCLEOTIDE SEQUENCE [GENOMIC DNA]</scope>
    <scope>INDUCTION</scope>
    <source>
        <tissue>Liver</tissue>
    </source>
</reference>
<reference key="3">
    <citation type="journal article" date="2004" name="Nature">
        <title>Genome sequence of the Brown Norway rat yields insights into mammalian evolution.</title>
        <authorList>
            <person name="Gibbs R.A."/>
            <person name="Weinstock G.M."/>
            <person name="Metzker M.L."/>
            <person name="Muzny D.M."/>
            <person name="Sodergren E.J."/>
            <person name="Scherer S."/>
            <person name="Scott G."/>
            <person name="Steffen D."/>
            <person name="Worley K.C."/>
            <person name="Burch P.E."/>
            <person name="Okwuonu G."/>
            <person name="Hines S."/>
            <person name="Lewis L."/>
            <person name="Deramo C."/>
            <person name="Delgado O."/>
            <person name="Dugan-Rocha S."/>
            <person name="Miner G."/>
            <person name="Morgan M."/>
            <person name="Hawes A."/>
            <person name="Gill R."/>
            <person name="Holt R.A."/>
            <person name="Adams M.D."/>
            <person name="Amanatides P.G."/>
            <person name="Baden-Tillson H."/>
            <person name="Barnstead M."/>
            <person name="Chin S."/>
            <person name="Evans C.A."/>
            <person name="Ferriera S."/>
            <person name="Fosler C."/>
            <person name="Glodek A."/>
            <person name="Gu Z."/>
            <person name="Jennings D."/>
            <person name="Kraft C.L."/>
            <person name="Nguyen T."/>
            <person name="Pfannkoch C.M."/>
            <person name="Sitter C."/>
            <person name="Sutton G.G."/>
            <person name="Venter J.C."/>
            <person name="Woodage T."/>
            <person name="Smith D."/>
            <person name="Lee H.-M."/>
            <person name="Gustafson E."/>
            <person name="Cahill P."/>
            <person name="Kana A."/>
            <person name="Doucette-Stamm L."/>
            <person name="Weinstock K."/>
            <person name="Fechtel K."/>
            <person name="Weiss R.B."/>
            <person name="Dunn D.M."/>
            <person name="Green E.D."/>
            <person name="Blakesley R.W."/>
            <person name="Bouffard G.G."/>
            <person name="De Jong P.J."/>
            <person name="Osoegawa K."/>
            <person name="Zhu B."/>
            <person name="Marra M."/>
            <person name="Schein J."/>
            <person name="Bosdet I."/>
            <person name="Fjell C."/>
            <person name="Jones S."/>
            <person name="Krzywinski M."/>
            <person name="Mathewson C."/>
            <person name="Siddiqui A."/>
            <person name="Wye N."/>
            <person name="McPherson J."/>
            <person name="Zhao S."/>
            <person name="Fraser C.M."/>
            <person name="Shetty J."/>
            <person name="Shatsman S."/>
            <person name="Geer K."/>
            <person name="Chen Y."/>
            <person name="Abramzon S."/>
            <person name="Nierman W.C."/>
            <person name="Havlak P.H."/>
            <person name="Chen R."/>
            <person name="Durbin K.J."/>
            <person name="Egan A."/>
            <person name="Ren Y."/>
            <person name="Song X.-Z."/>
            <person name="Li B."/>
            <person name="Liu Y."/>
            <person name="Qin X."/>
            <person name="Cawley S."/>
            <person name="Cooney A.J."/>
            <person name="D'Souza L.M."/>
            <person name="Martin K."/>
            <person name="Wu J.Q."/>
            <person name="Gonzalez-Garay M.L."/>
            <person name="Jackson A.R."/>
            <person name="Kalafus K.J."/>
            <person name="McLeod M.P."/>
            <person name="Milosavljevic A."/>
            <person name="Virk D."/>
            <person name="Volkov A."/>
            <person name="Wheeler D.A."/>
            <person name="Zhang Z."/>
            <person name="Bailey J.A."/>
            <person name="Eichler E.E."/>
            <person name="Tuzun E."/>
            <person name="Birney E."/>
            <person name="Mongin E."/>
            <person name="Ureta-Vidal A."/>
            <person name="Woodwark C."/>
            <person name="Zdobnov E."/>
            <person name="Bork P."/>
            <person name="Suyama M."/>
            <person name="Torrents D."/>
            <person name="Alexandersson M."/>
            <person name="Trask B.J."/>
            <person name="Young J.M."/>
            <person name="Huang H."/>
            <person name="Wang H."/>
            <person name="Xing H."/>
            <person name="Daniels S."/>
            <person name="Gietzen D."/>
            <person name="Schmidt J."/>
            <person name="Stevens K."/>
            <person name="Vitt U."/>
            <person name="Wingrove J."/>
            <person name="Camara F."/>
            <person name="Mar Alba M."/>
            <person name="Abril J.F."/>
            <person name="Guigo R."/>
            <person name="Smit A."/>
            <person name="Dubchak I."/>
            <person name="Rubin E.M."/>
            <person name="Couronne O."/>
            <person name="Poliakov A."/>
            <person name="Huebner N."/>
            <person name="Ganten D."/>
            <person name="Goesele C."/>
            <person name="Hummel O."/>
            <person name="Kreitler T."/>
            <person name="Lee Y.-A."/>
            <person name="Monti J."/>
            <person name="Schulz H."/>
            <person name="Zimdahl H."/>
            <person name="Himmelbauer H."/>
            <person name="Lehrach H."/>
            <person name="Jacob H.J."/>
            <person name="Bromberg S."/>
            <person name="Gullings-Handley J."/>
            <person name="Jensen-Seaman M.I."/>
            <person name="Kwitek A.E."/>
            <person name="Lazar J."/>
            <person name="Pasko D."/>
            <person name="Tonellato P.J."/>
            <person name="Twigger S."/>
            <person name="Ponting C.P."/>
            <person name="Duarte J.M."/>
            <person name="Rice S."/>
            <person name="Goodstadt L."/>
            <person name="Beatson S.A."/>
            <person name="Emes R.D."/>
            <person name="Winter E.E."/>
            <person name="Webber C."/>
            <person name="Brandt P."/>
            <person name="Nyakatura G."/>
            <person name="Adetobi M."/>
            <person name="Chiaromonte F."/>
            <person name="Elnitski L."/>
            <person name="Eswara P."/>
            <person name="Hardison R.C."/>
            <person name="Hou M."/>
            <person name="Kolbe D."/>
            <person name="Makova K."/>
            <person name="Miller W."/>
            <person name="Nekrutenko A."/>
            <person name="Riemer C."/>
            <person name="Schwartz S."/>
            <person name="Taylor J."/>
            <person name="Yang S."/>
            <person name="Zhang Y."/>
            <person name="Lindpaintner K."/>
            <person name="Andrews T.D."/>
            <person name="Caccamo M."/>
            <person name="Clamp M."/>
            <person name="Clarke L."/>
            <person name="Curwen V."/>
            <person name="Durbin R.M."/>
            <person name="Eyras E."/>
            <person name="Searle S.M."/>
            <person name="Cooper G.M."/>
            <person name="Batzoglou S."/>
            <person name="Brudno M."/>
            <person name="Sidow A."/>
            <person name="Stone E.A."/>
            <person name="Payseur B.A."/>
            <person name="Bourque G."/>
            <person name="Lopez-Otin C."/>
            <person name="Puente X.S."/>
            <person name="Chakrabarti K."/>
            <person name="Chatterji S."/>
            <person name="Dewey C."/>
            <person name="Pachter L."/>
            <person name="Bray N."/>
            <person name="Yap V.B."/>
            <person name="Caspi A."/>
            <person name="Tesler G."/>
            <person name="Pevzner P.A."/>
            <person name="Haussler D."/>
            <person name="Roskin K.M."/>
            <person name="Baertsch R."/>
            <person name="Clawson H."/>
            <person name="Furey T.S."/>
            <person name="Hinrichs A.S."/>
            <person name="Karolchik D."/>
            <person name="Kent W.J."/>
            <person name="Rosenbloom K.R."/>
            <person name="Trumbower H."/>
            <person name="Weirauch M."/>
            <person name="Cooper D.N."/>
            <person name="Stenson P.D."/>
            <person name="Ma B."/>
            <person name="Brent M."/>
            <person name="Arumugam M."/>
            <person name="Shteynberg D."/>
            <person name="Copley R.R."/>
            <person name="Taylor M.S."/>
            <person name="Riethman H."/>
            <person name="Mudunuri U."/>
            <person name="Peterson J."/>
            <person name="Guyer M."/>
            <person name="Felsenfeld A."/>
            <person name="Old S."/>
            <person name="Mockrin S."/>
            <person name="Collins F.S."/>
        </authorList>
    </citation>
    <scope>NUCLEOTIDE SEQUENCE [LARGE SCALE GENOMIC DNA]</scope>
    <source>
        <strain>Brown Norway</strain>
    </source>
</reference>
<reference key="4">
    <citation type="submission" date="2005-09" db="EMBL/GenBank/DDBJ databases">
        <authorList>
            <person name="Mural R.J."/>
            <person name="Adams M.D."/>
            <person name="Myers E.W."/>
            <person name="Smith H.O."/>
            <person name="Venter J.C."/>
        </authorList>
    </citation>
    <scope>NUCLEOTIDE SEQUENCE [LARGE SCALE GENOMIC DNA]</scope>
</reference>
<reference key="5">
    <citation type="journal article" date="2014" name="Semin. Cell Dev. Biol.">
        <title>Epiregulin: roles in normal physiology and cancer.</title>
        <authorList>
            <person name="Riese D.J. II"/>
            <person name="Cullum R.L."/>
        </authorList>
    </citation>
    <scope>REVIEW</scope>
</reference>
<protein>
    <recommendedName>
        <fullName>Proepiregulin</fullName>
    </recommendedName>
    <component>
        <recommendedName>
            <fullName>Epiregulin</fullName>
            <shortName>EPR</shortName>
        </recommendedName>
    </component>
</protein>
<proteinExistence type="evidence at protein level"/>
<evidence type="ECO:0000250" key="1"/>
<evidence type="ECO:0000250" key="2">
    <source>
        <dbReference type="UniProtKB" id="O14944"/>
    </source>
</evidence>
<evidence type="ECO:0000255" key="3"/>
<evidence type="ECO:0000255" key="4">
    <source>
        <dbReference type="PROSITE-ProRule" id="PRU00076"/>
    </source>
</evidence>
<evidence type="ECO:0000269" key="5">
    <source>
    </source>
</evidence>
<evidence type="ECO:0000269" key="6">
    <source>
    </source>
</evidence>
<evidence type="ECO:0000303" key="7">
    <source>
    </source>
</evidence>
<keyword id="KW-0037">Angiogenesis</keyword>
<keyword id="KW-1003">Cell membrane</keyword>
<keyword id="KW-0217">Developmental protein</keyword>
<keyword id="KW-0221">Differentiation</keyword>
<keyword id="KW-0903">Direct protein sequencing</keyword>
<keyword id="KW-1015">Disulfide bond</keyword>
<keyword id="KW-0245">EGF-like domain</keyword>
<keyword id="KW-0325">Glycoprotein</keyword>
<keyword id="KW-0339">Growth factor</keyword>
<keyword id="KW-0472">Membrane</keyword>
<keyword id="KW-0497">Mitogen</keyword>
<keyword id="KW-1185">Reference proteome</keyword>
<keyword id="KW-0964">Secreted</keyword>
<keyword id="KW-0732">Signal</keyword>
<keyword id="KW-0812">Transmembrane</keyword>
<keyword id="KW-1133">Transmembrane helix</keyword>
<name>EREG_RAT</name>
<accession>Q9Z0L5</accession>
<organism>
    <name type="scientific">Rattus norvegicus</name>
    <name type="common">Rat</name>
    <dbReference type="NCBI Taxonomy" id="10116"/>
    <lineage>
        <taxon>Eukaryota</taxon>
        <taxon>Metazoa</taxon>
        <taxon>Chordata</taxon>
        <taxon>Craniata</taxon>
        <taxon>Vertebrata</taxon>
        <taxon>Euteleostomi</taxon>
        <taxon>Mammalia</taxon>
        <taxon>Eutheria</taxon>
        <taxon>Euarchontoglires</taxon>
        <taxon>Glires</taxon>
        <taxon>Rodentia</taxon>
        <taxon>Myomorpha</taxon>
        <taxon>Muroidea</taxon>
        <taxon>Muridae</taxon>
        <taxon>Murinae</taxon>
        <taxon>Rattus</taxon>
    </lineage>
</organism>
<dbReference type="EMBL" id="AF074952">
    <property type="protein sequence ID" value="AAD10631.1"/>
    <property type="molecule type" value="mRNA"/>
</dbReference>
<dbReference type="EMBL" id="AB078739">
    <property type="protein sequence ID" value="BAC44880.1"/>
    <property type="molecule type" value="Genomic_DNA"/>
</dbReference>
<dbReference type="EMBL" id="AABR07072382">
    <property type="status" value="NOT_ANNOTATED_CDS"/>
    <property type="molecule type" value="Genomic_DNA"/>
</dbReference>
<dbReference type="EMBL" id="AC108576">
    <property type="status" value="NOT_ANNOTATED_CDS"/>
    <property type="molecule type" value="Genomic_DNA"/>
</dbReference>
<dbReference type="EMBL" id="CH474060">
    <property type="protein sequence ID" value="EDL88580.1"/>
    <property type="molecule type" value="Genomic_DNA"/>
</dbReference>
<dbReference type="RefSeq" id="NP_067721.1">
    <property type="nucleotide sequence ID" value="NM_021689.1"/>
</dbReference>
<dbReference type="SMR" id="Q9Z0L5"/>
<dbReference type="FunCoup" id="Q9Z0L5">
    <property type="interactions" value="535"/>
</dbReference>
<dbReference type="STRING" id="10116.ENSRNOP00000003716"/>
<dbReference type="GlyCosmos" id="Q9Z0L5">
    <property type="glycosylation" value="1 site, No reported glycans"/>
</dbReference>
<dbReference type="GlyGen" id="Q9Z0L5">
    <property type="glycosylation" value="1 site"/>
</dbReference>
<dbReference type="PhosphoSitePlus" id="Q9Z0L5"/>
<dbReference type="PaxDb" id="10116-ENSRNOP00000003716"/>
<dbReference type="Ensembl" id="ENSRNOT00000003716.4">
    <property type="protein sequence ID" value="ENSRNOP00000003716.2"/>
    <property type="gene ID" value="ENSRNOG00000002771.4"/>
</dbReference>
<dbReference type="GeneID" id="59325"/>
<dbReference type="KEGG" id="rno:59325"/>
<dbReference type="UCSC" id="RGD:620299">
    <property type="organism name" value="rat"/>
</dbReference>
<dbReference type="AGR" id="RGD:620299"/>
<dbReference type="CTD" id="2069"/>
<dbReference type="RGD" id="620299">
    <property type="gene designation" value="Ereg"/>
</dbReference>
<dbReference type="eggNOG" id="ENOG502S5DM">
    <property type="taxonomic scope" value="Eukaryota"/>
</dbReference>
<dbReference type="GeneTree" id="ENSGT00510000048748"/>
<dbReference type="HOGENOM" id="CLU_138015_0_0_1"/>
<dbReference type="InParanoid" id="Q9Z0L5"/>
<dbReference type="OMA" id="CKWYKKN"/>
<dbReference type="OrthoDB" id="6133584at2759"/>
<dbReference type="PhylomeDB" id="Q9Z0L5"/>
<dbReference type="TreeFam" id="TF336145"/>
<dbReference type="Reactome" id="R-RNO-1227986">
    <property type="pathway name" value="Signaling by ERBB2"/>
</dbReference>
<dbReference type="Reactome" id="R-RNO-1236394">
    <property type="pathway name" value="Signaling by ERBB4"/>
</dbReference>
<dbReference type="Reactome" id="R-RNO-1250196">
    <property type="pathway name" value="SHC1 events in ERBB2 signaling"/>
</dbReference>
<dbReference type="Reactome" id="R-RNO-1250342">
    <property type="pathway name" value="PI3K events in ERBB4 signaling"/>
</dbReference>
<dbReference type="Reactome" id="R-RNO-1250347">
    <property type="pathway name" value="SHC1 events in ERBB4 signaling"/>
</dbReference>
<dbReference type="Reactome" id="R-RNO-1257604">
    <property type="pathway name" value="PIP3 activates AKT signaling"/>
</dbReference>
<dbReference type="Reactome" id="R-RNO-177929">
    <property type="pathway name" value="Signaling by EGFR"/>
</dbReference>
<dbReference type="Reactome" id="R-RNO-179812">
    <property type="pathway name" value="GRB2 events in EGFR signaling"/>
</dbReference>
<dbReference type="Reactome" id="R-RNO-180292">
    <property type="pathway name" value="GAB1 signalosome"/>
</dbReference>
<dbReference type="Reactome" id="R-RNO-180336">
    <property type="pathway name" value="SHC1 events in EGFR signaling"/>
</dbReference>
<dbReference type="Reactome" id="R-RNO-182971">
    <property type="pathway name" value="EGFR downregulation"/>
</dbReference>
<dbReference type="Reactome" id="R-RNO-1963640">
    <property type="pathway name" value="GRB2 events in ERBB2 signaling"/>
</dbReference>
<dbReference type="Reactome" id="R-RNO-1963642">
    <property type="pathway name" value="PI3K events in ERBB2 signaling"/>
</dbReference>
<dbReference type="Reactome" id="R-RNO-212718">
    <property type="pathway name" value="EGFR interacts with phospholipase C-gamma"/>
</dbReference>
<dbReference type="Reactome" id="R-RNO-5673001">
    <property type="pathway name" value="RAF/MAP kinase cascade"/>
</dbReference>
<dbReference type="Reactome" id="R-RNO-6785631">
    <property type="pathway name" value="ERBB2 Regulates Cell Motility"/>
</dbReference>
<dbReference type="Reactome" id="R-RNO-6811558">
    <property type="pathway name" value="PI5P, PP2A and IER3 Regulate PI3K/AKT Signaling"/>
</dbReference>
<dbReference type="Reactome" id="R-RNO-8847993">
    <property type="pathway name" value="ERBB2 Activates PTK6 Signaling"/>
</dbReference>
<dbReference type="Reactome" id="R-RNO-8856825">
    <property type="pathway name" value="Cargo recognition for clathrin-mediated endocytosis"/>
</dbReference>
<dbReference type="Reactome" id="R-RNO-8856828">
    <property type="pathway name" value="Clathrin-mediated endocytosis"/>
</dbReference>
<dbReference type="Reactome" id="R-RNO-8863795">
    <property type="pathway name" value="Downregulation of ERBB2 signaling"/>
</dbReference>
<dbReference type="Reactome" id="R-RNO-9009391">
    <property type="pathway name" value="Extra-nuclear estrogen signaling"/>
</dbReference>
<dbReference type="PRO" id="PR:Q9Z0L5"/>
<dbReference type="Proteomes" id="UP000002494">
    <property type="component" value="Chromosome 14"/>
</dbReference>
<dbReference type="Proteomes" id="UP000234681">
    <property type="component" value="Chromosome 14"/>
</dbReference>
<dbReference type="Bgee" id="ENSRNOG00000002771">
    <property type="expression patterns" value="Expressed in esophagus and 6 other cell types or tissues"/>
</dbReference>
<dbReference type="GO" id="GO:0005615">
    <property type="term" value="C:extracellular space"/>
    <property type="evidence" value="ECO:0000314"/>
    <property type="project" value="RGD"/>
</dbReference>
<dbReference type="GO" id="GO:0005886">
    <property type="term" value="C:plasma membrane"/>
    <property type="evidence" value="ECO:0007669"/>
    <property type="project" value="UniProtKB-SubCell"/>
</dbReference>
<dbReference type="GO" id="GO:0005154">
    <property type="term" value="F:epidermal growth factor receptor binding"/>
    <property type="evidence" value="ECO:0000250"/>
    <property type="project" value="UniProtKB"/>
</dbReference>
<dbReference type="GO" id="GO:0008083">
    <property type="term" value="F:growth factor activity"/>
    <property type="evidence" value="ECO:0000314"/>
    <property type="project" value="RGD"/>
</dbReference>
<dbReference type="GO" id="GO:0048018">
    <property type="term" value="F:receptor ligand activity"/>
    <property type="evidence" value="ECO:0000266"/>
    <property type="project" value="RGD"/>
</dbReference>
<dbReference type="GO" id="GO:0030297">
    <property type="term" value="F:transmembrane receptor protein tyrosine kinase activator activity"/>
    <property type="evidence" value="ECO:0000266"/>
    <property type="project" value="RGD"/>
</dbReference>
<dbReference type="GO" id="GO:0001525">
    <property type="term" value="P:angiogenesis"/>
    <property type="evidence" value="ECO:0007669"/>
    <property type="project" value="UniProtKB-KW"/>
</dbReference>
<dbReference type="GO" id="GO:0007267">
    <property type="term" value="P:cell-cell signaling"/>
    <property type="evidence" value="ECO:0000250"/>
    <property type="project" value="UniProtKB"/>
</dbReference>
<dbReference type="GO" id="GO:0019221">
    <property type="term" value="P:cytokine-mediated signaling pathway"/>
    <property type="evidence" value="ECO:0000250"/>
    <property type="project" value="UniProtKB"/>
</dbReference>
<dbReference type="GO" id="GO:0007173">
    <property type="term" value="P:epidermal growth factor receptor signaling pathway"/>
    <property type="evidence" value="ECO:0000314"/>
    <property type="project" value="UniProtKB"/>
</dbReference>
<dbReference type="GO" id="GO:0038134">
    <property type="term" value="P:ERBB2-EGFR signaling pathway"/>
    <property type="evidence" value="ECO:0000266"/>
    <property type="project" value="RGD"/>
</dbReference>
<dbReference type="GO" id="GO:0038135">
    <property type="term" value="P:ERBB2-ERBB4 signaling pathway"/>
    <property type="evidence" value="ECO:0000266"/>
    <property type="project" value="RGD"/>
</dbReference>
<dbReference type="GO" id="GO:0038138">
    <property type="term" value="P:ERBB4-ERBB4 signaling pathway"/>
    <property type="evidence" value="ECO:0000266"/>
    <property type="project" value="RGD"/>
</dbReference>
<dbReference type="GO" id="GO:0007143">
    <property type="term" value="P:female meiotic nuclear division"/>
    <property type="evidence" value="ECO:0000314"/>
    <property type="project" value="UniProtKB"/>
</dbReference>
<dbReference type="GO" id="GO:0043616">
    <property type="term" value="P:keratinocyte proliferation"/>
    <property type="evidence" value="ECO:0000250"/>
    <property type="project" value="UniProtKB"/>
</dbReference>
<dbReference type="GO" id="GO:0042700">
    <property type="term" value="P:luteinizing hormone signaling pathway"/>
    <property type="evidence" value="ECO:0000314"/>
    <property type="project" value="UniProtKB"/>
</dbReference>
<dbReference type="GO" id="GO:0009299">
    <property type="term" value="P:mRNA transcription"/>
    <property type="evidence" value="ECO:0000250"/>
    <property type="project" value="UniProtKB"/>
</dbReference>
<dbReference type="GO" id="GO:0008285">
    <property type="term" value="P:negative regulation of cell population proliferation"/>
    <property type="evidence" value="ECO:0000250"/>
    <property type="project" value="UniProtKB"/>
</dbReference>
<dbReference type="GO" id="GO:0045892">
    <property type="term" value="P:negative regulation of DNA-templated transcription"/>
    <property type="evidence" value="ECO:0000250"/>
    <property type="project" value="UniProtKB"/>
</dbReference>
<dbReference type="GO" id="GO:0051151">
    <property type="term" value="P:negative regulation of smooth muscle cell differentiation"/>
    <property type="evidence" value="ECO:0000250"/>
    <property type="project" value="UniProtKB"/>
</dbReference>
<dbReference type="GO" id="GO:0001556">
    <property type="term" value="P:oocyte maturation"/>
    <property type="evidence" value="ECO:0000314"/>
    <property type="project" value="UniProtKB"/>
</dbReference>
<dbReference type="GO" id="GO:0001550">
    <property type="term" value="P:ovarian cumulus expansion"/>
    <property type="evidence" value="ECO:0000314"/>
    <property type="project" value="UniProtKB"/>
</dbReference>
<dbReference type="GO" id="GO:0030728">
    <property type="term" value="P:ovulation"/>
    <property type="evidence" value="ECO:0000314"/>
    <property type="project" value="UniProtKB"/>
</dbReference>
<dbReference type="GO" id="GO:0045766">
    <property type="term" value="P:positive regulation of angiogenesis"/>
    <property type="evidence" value="ECO:0000304"/>
    <property type="project" value="UniProtKB"/>
</dbReference>
<dbReference type="GO" id="GO:0051781">
    <property type="term" value="P:positive regulation of cell division"/>
    <property type="evidence" value="ECO:0007669"/>
    <property type="project" value="UniProtKB-KW"/>
</dbReference>
<dbReference type="GO" id="GO:0008284">
    <property type="term" value="P:positive regulation of cell population proliferation"/>
    <property type="evidence" value="ECO:0000314"/>
    <property type="project" value="RGD"/>
</dbReference>
<dbReference type="GO" id="GO:0001819">
    <property type="term" value="P:positive regulation of cytokine production"/>
    <property type="evidence" value="ECO:0000250"/>
    <property type="project" value="UniProtKB"/>
</dbReference>
<dbReference type="GO" id="GO:0045740">
    <property type="term" value="P:positive regulation of DNA replication"/>
    <property type="evidence" value="ECO:0000314"/>
    <property type="project" value="UniProtKB"/>
</dbReference>
<dbReference type="GO" id="GO:0048146">
    <property type="term" value="P:positive regulation of fibroblast proliferation"/>
    <property type="evidence" value="ECO:0000250"/>
    <property type="project" value="UniProtKB"/>
</dbReference>
<dbReference type="GO" id="GO:0045089">
    <property type="term" value="P:positive regulation of innate immune response"/>
    <property type="evidence" value="ECO:0000250"/>
    <property type="project" value="UniProtKB"/>
</dbReference>
<dbReference type="GO" id="GO:0032755">
    <property type="term" value="P:positive regulation of interleukin-6 production"/>
    <property type="evidence" value="ECO:0000250"/>
    <property type="project" value="UniProtKB"/>
</dbReference>
<dbReference type="GO" id="GO:0045840">
    <property type="term" value="P:positive regulation of mitotic nuclear division"/>
    <property type="evidence" value="ECO:0000314"/>
    <property type="project" value="UniProtKB"/>
</dbReference>
<dbReference type="GO" id="GO:0042327">
    <property type="term" value="P:positive regulation of phosphorylation"/>
    <property type="evidence" value="ECO:0000250"/>
    <property type="project" value="UniProtKB"/>
</dbReference>
<dbReference type="GO" id="GO:0045860">
    <property type="term" value="P:positive regulation of protein kinase activity"/>
    <property type="evidence" value="ECO:0000250"/>
    <property type="project" value="UniProtKB"/>
</dbReference>
<dbReference type="GO" id="GO:0048661">
    <property type="term" value="P:positive regulation of smooth muscle cell proliferation"/>
    <property type="evidence" value="ECO:0000314"/>
    <property type="project" value="UniProtKB"/>
</dbReference>
<dbReference type="GO" id="GO:0048160">
    <property type="term" value="P:primary follicle stage"/>
    <property type="evidence" value="ECO:0000314"/>
    <property type="project" value="UniProtKB"/>
</dbReference>
<dbReference type="GO" id="GO:0043434">
    <property type="term" value="P:response to peptide hormone"/>
    <property type="evidence" value="ECO:0000270"/>
    <property type="project" value="RGD"/>
</dbReference>
<dbReference type="FunFam" id="2.10.25.10:FF:000320">
    <property type="entry name" value="Proepiregulin"/>
    <property type="match status" value="1"/>
</dbReference>
<dbReference type="Gene3D" id="2.10.25.10">
    <property type="entry name" value="Laminin"/>
    <property type="match status" value="1"/>
</dbReference>
<dbReference type="InterPro" id="IPR000742">
    <property type="entry name" value="EGF-like_dom"/>
</dbReference>
<dbReference type="PANTHER" id="PTHR10740:SF11">
    <property type="entry name" value="PROEPIREGULIN"/>
    <property type="match status" value="1"/>
</dbReference>
<dbReference type="PANTHER" id="PTHR10740">
    <property type="entry name" value="TRANSFORMING GROWTH FACTOR ALPHA"/>
    <property type="match status" value="1"/>
</dbReference>
<dbReference type="PRINTS" id="PR00009">
    <property type="entry name" value="EGFTGF"/>
</dbReference>
<dbReference type="SUPFAM" id="SSF57196">
    <property type="entry name" value="EGF/Laminin"/>
    <property type="match status" value="1"/>
</dbReference>
<dbReference type="PROSITE" id="PS00022">
    <property type="entry name" value="EGF_1"/>
    <property type="match status" value="1"/>
</dbReference>
<dbReference type="PROSITE" id="PS01186">
    <property type="entry name" value="EGF_2"/>
    <property type="match status" value="1"/>
</dbReference>
<dbReference type="PROSITE" id="PS50026">
    <property type="entry name" value="EGF_3"/>
    <property type="match status" value="1"/>
</dbReference>
<gene>
    <name type="primary">Ereg</name>
</gene>
<comment type="function">
    <text evidence="6 7">Ligand of the EGF receptor/EGFR and ERBB4. Stimulates EGFR and ERBB4 tyrosine phosphorylation (PubMed:9990076). Contributes to inflammation, wound healing, tissue repair, and oocyte maturation by regulating angiogenesis and vascular remodeling and by stimulating cell proliferation (PubMed:24631357).</text>
</comment>
<comment type="subunit">
    <text evidence="2">Interacts with EGFR and ERBB4.</text>
</comment>
<comment type="subcellular location">
    <molecule>Epiregulin</molecule>
    <subcellularLocation>
        <location evidence="2">Secreted</location>
        <location evidence="2">Extracellular space</location>
    </subcellularLocation>
</comment>
<comment type="subcellular location">
    <molecule>Proepiregulin</molecule>
    <subcellularLocation>
        <location evidence="2">Cell membrane</location>
        <topology evidence="2">Single-pass type I membrane protein</topology>
    </subcellularLocation>
</comment>
<comment type="induction">
    <text evidence="5 6">By angiotensin II, endothelin-1 and alpha-thrombin. Strongly induced in ovarian granulosa cells by FSH stimulation.</text>
</comment>
<feature type="signal peptide" evidence="3">
    <location>
        <begin position="1"/>
        <end position="22"/>
    </location>
</feature>
<feature type="chain" id="PRO_5000054710" description="Proepiregulin">
    <location>
        <begin position="23"/>
        <end position="162"/>
    </location>
</feature>
<feature type="propeptide" id="PRO_0000433960" evidence="6">
    <location>
        <begin position="23"/>
        <end position="55"/>
    </location>
</feature>
<feature type="chain" id="PRO_5000054711" description="Epiregulin">
    <location>
        <begin position="56"/>
        <end position="101"/>
    </location>
</feature>
<feature type="propeptide" id="PRO_0000433961" description="Removed in mature form" evidence="1">
    <location>
        <begin position="102"/>
        <end position="162"/>
    </location>
</feature>
<feature type="transmembrane region" description="Helical" evidence="3">
    <location>
        <begin position="113"/>
        <end position="133"/>
    </location>
</feature>
<feature type="domain" description="EGF-like" evidence="4">
    <location>
        <begin position="57"/>
        <end position="97"/>
    </location>
</feature>
<feature type="glycosylation site" description="N-linked (GlcNAc...) asparagine" evidence="3">
    <location>
        <position position="40"/>
    </location>
</feature>
<feature type="disulfide bond" evidence="4">
    <location>
        <begin position="61"/>
        <end position="74"/>
    </location>
</feature>
<feature type="disulfide bond" evidence="4">
    <location>
        <begin position="69"/>
        <end position="85"/>
    </location>
</feature>
<feature type="disulfide bond" evidence="4">
    <location>
        <begin position="87"/>
        <end position="96"/>
    </location>
</feature>
<sequence>METFPAAWVLALLCLGSHLLQAVISTTVIPSCIPEESEDNCTALVQMEDDPRVAQVLITKCSSDMDGYCLHGHCIYLVDMSEKYCRCEVGYTGLRCEHFFLTVHQPLSREYVALTVILVFLFLIVTAGSMYYFCRWYRNRKSKKSREEYERVTSGGPGLPQV</sequence>